<name>MURG_PORGI</name>
<protein>
    <recommendedName>
        <fullName evidence="1">UDP-N-acetylglucosamine--N-acetylmuramyl-(pentapeptide) pyrophosphoryl-undecaprenol N-acetylglucosamine transferase</fullName>
        <ecNumber evidence="1">2.4.1.227</ecNumber>
    </recommendedName>
    <alternativeName>
        <fullName evidence="1">Undecaprenyl-PP-MurNAc-pentapeptide-UDPGlcNAc GlcNAc transferase</fullName>
    </alternativeName>
</protein>
<sequence length="379" mass="41492">MNNEESNAKLRFIISGGGTGGHIFPAISIADALRRRYPECEILFVGAEGRMEMERVPRSGYEIVGLPIKGLDRKHLLSNYKVAIAVIRSMRLANKTIRNFRPDMVIGVGGYASGPTLRRAHSLGIPTLIQEQNSYAGVTNKLLSRGAHKICVAYPEMDKFFSPEKIVFTGNPIRPEIEFGHPSRSESLRFFGFEQSESPVVLVVGGSLGALTINKSIADKLGKWAESGVHLIWQTGKNYIETARKAVENHPGLKCYVNDFITRMDYAYCAADLVVSRAGACSISELCLLGKPTILVPSPNVAEDHQTKNALALSTRAAAVLIPDTEAIELLTDTALSLVRDPAELSSLSEQIRTLAKPQAADRIVDEIARIVEHEKRAN</sequence>
<evidence type="ECO:0000255" key="1">
    <source>
        <dbReference type="HAMAP-Rule" id="MF_00033"/>
    </source>
</evidence>
<reference key="1">
    <citation type="journal article" date="2003" name="J. Bacteriol.">
        <title>Complete genome sequence of the oral pathogenic bacterium Porphyromonas gingivalis strain W83.</title>
        <authorList>
            <person name="Nelson K.E."/>
            <person name="Fleischmann R.D."/>
            <person name="DeBoy R.T."/>
            <person name="Paulsen I.T."/>
            <person name="Fouts D.E."/>
            <person name="Eisen J.A."/>
            <person name="Daugherty S.C."/>
            <person name="Dodson R.J."/>
            <person name="Durkin A.S."/>
            <person name="Gwinn M.L."/>
            <person name="Haft D.H."/>
            <person name="Kolonay J.F."/>
            <person name="Nelson W.C."/>
            <person name="Mason T.M."/>
            <person name="Tallon L."/>
            <person name="Gray J."/>
            <person name="Granger D."/>
            <person name="Tettelin H."/>
            <person name="Dong H."/>
            <person name="Galvin J.L."/>
            <person name="Duncan M.J."/>
            <person name="Dewhirst F.E."/>
            <person name="Fraser C.M."/>
        </authorList>
    </citation>
    <scope>NUCLEOTIDE SEQUENCE [LARGE SCALE GENOMIC DNA]</scope>
    <source>
        <strain>ATCC BAA-308 / W83</strain>
    </source>
</reference>
<feature type="chain" id="PRO_0000109196" description="UDP-N-acetylglucosamine--N-acetylmuramyl-(pentapeptide) pyrophosphoryl-undecaprenol N-acetylglucosamine transferase">
    <location>
        <begin position="1"/>
        <end position="379"/>
    </location>
</feature>
<feature type="binding site" evidence="1">
    <location>
        <begin position="19"/>
        <end position="21"/>
    </location>
    <ligand>
        <name>UDP-N-acetyl-alpha-D-glucosamine</name>
        <dbReference type="ChEBI" id="CHEBI:57705"/>
    </ligand>
</feature>
<feature type="binding site" evidence="1">
    <location>
        <position position="133"/>
    </location>
    <ligand>
        <name>UDP-N-acetyl-alpha-D-glucosamine</name>
        <dbReference type="ChEBI" id="CHEBI:57705"/>
    </ligand>
</feature>
<feature type="binding site" evidence="1">
    <location>
        <position position="174"/>
    </location>
    <ligand>
        <name>UDP-N-acetyl-alpha-D-glucosamine</name>
        <dbReference type="ChEBI" id="CHEBI:57705"/>
    </ligand>
</feature>
<feature type="binding site" evidence="1">
    <location>
        <position position="207"/>
    </location>
    <ligand>
        <name>UDP-N-acetyl-alpha-D-glucosamine</name>
        <dbReference type="ChEBI" id="CHEBI:57705"/>
    </ligand>
</feature>
<feature type="binding site" evidence="1">
    <location>
        <position position="261"/>
    </location>
    <ligand>
        <name>UDP-N-acetyl-alpha-D-glucosamine</name>
        <dbReference type="ChEBI" id="CHEBI:57705"/>
    </ligand>
</feature>
<feature type="binding site" evidence="1">
    <location>
        <position position="306"/>
    </location>
    <ligand>
        <name>UDP-N-acetyl-alpha-D-glucosamine</name>
        <dbReference type="ChEBI" id="CHEBI:57705"/>
    </ligand>
</feature>
<keyword id="KW-0131">Cell cycle</keyword>
<keyword id="KW-0132">Cell division</keyword>
<keyword id="KW-0997">Cell inner membrane</keyword>
<keyword id="KW-1003">Cell membrane</keyword>
<keyword id="KW-0133">Cell shape</keyword>
<keyword id="KW-0961">Cell wall biogenesis/degradation</keyword>
<keyword id="KW-0328">Glycosyltransferase</keyword>
<keyword id="KW-0472">Membrane</keyword>
<keyword id="KW-0573">Peptidoglycan synthesis</keyword>
<keyword id="KW-1185">Reference proteome</keyword>
<keyword id="KW-0808">Transferase</keyword>
<accession>Q7MAW5</accession>
<organism>
    <name type="scientific">Porphyromonas gingivalis (strain ATCC BAA-308 / W83)</name>
    <dbReference type="NCBI Taxonomy" id="242619"/>
    <lineage>
        <taxon>Bacteria</taxon>
        <taxon>Pseudomonadati</taxon>
        <taxon>Bacteroidota</taxon>
        <taxon>Bacteroidia</taxon>
        <taxon>Bacteroidales</taxon>
        <taxon>Porphyromonadaceae</taxon>
        <taxon>Porphyromonas</taxon>
    </lineage>
</organism>
<proteinExistence type="inferred from homology"/>
<comment type="function">
    <text evidence="1">Cell wall formation. Catalyzes the transfer of a GlcNAc subunit on undecaprenyl-pyrophosphoryl-MurNAc-pentapeptide (lipid intermediate I) to form undecaprenyl-pyrophosphoryl-MurNAc-(pentapeptide)GlcNAc (lipid intermediate II).</text>
</comment>
<comment type="catalytic activity">
    <reaction evidence="1">
        <text>di-trans,octa-cis-undecaprenyl diphospho-N-acetyl-alpha-D-muramoyl-L-alanyl-D-glutamyl-meso-2,6-diaminopimeloyl-D-alanyl-D-alanine + UDP-N-acetyl-alpha-D-glucosamine = di-trans,octa-cis-undecaprenyl diphospho-[N-acetyl-alpha-D-glucosaminyl-(1-&gt;4)]-N-acetyl-alpha-D-muramoyl-L-alanyl-D-glutamyl-meso-2,6-diaminopimeloyl-D-alanyl-D-alanine + UDP + H(+)</text>
        <dbReference type="Rhea" id="RHEA:31227"/>
        <dbReference type="ChEBI" id="CHEBI:15378"/>
        <dbReference type="ChEBI" id="CHEBI:57705"/>
        <dbReference type="ChEBI" id="CHEBI:58223"/>
        <dbReference type="ChEBI" id="CHEBI:61387"/>
        <dbReference type="ChEBI" id="CHEBI:61388"/>
        <dbReference type="EC" id="2.4.1.227"/>
    </reaction>
</comment>
<comment type="pathway">
    <text evidence="1">Cell wall biogenesis; peptidoglycan biosynthesis.</text>
</comment>
<comment type="subcellular location">
    <subcellularLocation>
        <location evidence="1">Cell inner membrane</location>
        <topology evidence="1">Peripheral membrane protein</topology>
        <orientation evidence="1">Cytoplasmic side</orientation>
    </subcellularLocation>
</comment>
<comment type="similarity">
    <text evidence="1">Belongs to the glycosyltransferase 28 family. MurG subfamily.</text>
</comment>
<gene>
    <name evidence="1" type="primary">murG</name>
    <name type="ordered locus">PG_0580</name>
</gene>
<dbReference type="EC" id="2.4.1.227" evidence="1"/>
<dbReference type="EMBL" id="AE015924">
    <property type="protein sequence ID" value="AAQ65767.1"/>
    <property type="molecule type" value="Genomic_DNA"/>
</dbReference>
<dbReference type="RefSeq" id="WP_004585120.1">
    <property type="nucleotide sequence ID" value="NC_002950.2"/>
</dbReference>
<dbReference type="SMR" id="Q7MAW5"/>
<dbReference type="STRING" id="242619.PG_0580"/>
<dbReference type="CAZy" id="GT28">
    <property type="family name" value="Glycosyltransferase Family 28"/>
</dbReference>
<dbReference type="EnsemblBacteria" id="AAQ65767">
    <property type="protein sequence ID" value="AAQ65767"/>
    <property type="gene ID" value="PG_0580"/>
</dbReference>
<dbReference type="KEGG" id="pgi:PG_0580"/>
<dbReference type="eggNOG" id="COG0707">
    <property type="taxonomic scope" value="Bacteria"/>
</dbReference>
<dbReference type="HOGENOM" id="CLU_037404_0_1_10"/>
<dbReference type="UniPathway" id="UPA00219"/>
<dbReference type="Proteomes" id="UP000000588">
    <property type="component" value="Chromosome"/>
</dbReference>
<dbReference type="GO" id="GO:0005886">
    <property type="term" value="C:plasma membrane"/>
    <property type="evidence" value="ECO:0007669"/>
    <property type="project" value="UniProtKB-SubCell"/>
</dbReference>
<dbReference type="GO" id="GO:0051991">
    <property type="term" value="F:UDP-N-acetyl-D-glucosamine:N-acetylmuramoyl-L-alanyl-D-glutamyl-meso-2,6-diaminopimelyl-D-alanyl-D-alanine-diphosphoundecaprenol 4-beta-N-acetylglucosaminlytransferase activity"/>
    <property type="evidence" value="ECO:0007669"/>
    <property type="project" value="RHEA"/>
</dbReference>
<dbReference type="GO" id="GO:0050511">
    <property type="term" value="F:undecaprenyldiphospho-muramoylpentapeptide beta-N-acetylglucosaminyltransferase activity"/>
    <property type="evidence" value="ECO:0007669"/>
    <property type="project" value="UniProtKB-UniRule"/>
</dbReference>
<dbReference type="GO" id="GO:0005975">
    <property type="term" value="P:carbohydrate metabolic process"/>
    <property type="evidence" value="ECO:0007669"/>
    <property type="project" value="InterPro"/>
</dbReference>
<dbReference type="GO" id="GO:0051301">
    <property type="term" value="P:cell division"/>
    <property type="evidence" value="ECO:0007669"/>
    <property type="project" value="UniProtKB-KW"/>
</dbReference>
<dbReference type="GO" id="GO:0071555">
    <property type="term" value="P:cell wall organization"/>
    <property type="evidence" value="ECO:0007669"/>
    <property type="project" value="UniProtKB-KW"/>
</dbReference>
<dbReference type="GO" id="GO:0030259">
    <property type="term" value="P:lipid glycosylation"/>
    <property type="evidence" value="ECO:0007669"/>
    <property type="project" value="UniProtKB-UniRule"/>
</dbReference>
<dbReference type="GO" id="GO:0009252">
    <property type="term" value="P:peptidoglycan biosynthetic process"/>
    <property type="evidence" value="ECO:0007669"/>
    <property type="project" value="UniProtKB-UniRule"/>
</dbReference>
<dbReference type="GO" id="GO:0008360">
    <property type="term" value="P:regulation of cell shape"/>
    <property type="evidence" value="ECO:0007669"/>
    <property type="project" value="UniProtKB-KW"/>
</dbReference>
<dbReference type="CDD" id="cd03785">
    <property type="entry name" value="GT28_MurG"/>
    <property type="match status" value="1"/>
</dbReference>
<dbReference type="Gene3D" id="3.40.50.2000">
    <property type="entry name" value="Glycogen Phosphorylase B"/>
    <property type="match status" value="2"/>
</dbReference>
<dbReference type="HAMAP" id="MF_00033">
    <property type="entry name" value="MurG"/>
    <property type="match status" value="1"/>
</dbReference>
<dbReference type="InterPro" id="IPR006009">
    <property type="entry name" value="GlcNAc_MurG"/>
</dbReference>
<dbReference type="InterPro" id="IPR007235">
    <property type="entry name" value="Glyco_trans_28_C"/>
</dbReference>
<dbReference type="InterPro" id="IPR004276">
    <property type="entry name" value="GlycoTrans_28_N"/>
</dbReference>
<dbReference type="NCBIfam" id="TIGR01133">
    <property type="entry name" value="murG"/>
    <property type="match status" value="1"/>
</dbReference>
<dbReference type="PANTHER" id="PTHR21015:SF22">
    <property type="entry name" value="GLYCOSYLTRANSFERASE"/>
    <property type="match status" value="1"/>
</dbReference>
<dbReference type="PANTHER" id="PTHR21015">
    <property type="entry name" value="UDP-N-ACETYLGLUCOSAMINE--N-ACETYLMURAMYL-(PENTAPEPTIDE) PYROPHOSPHORYL-UNDECAPRENOL N-ACETYLGLUCOSAMINE TRANSFERASE 1"/>
    <property type="match status" value="1"/>
</dbReference>
<dbReference type="Pfam" id="PF04101">
    <property type="entry name" value="Glyco_tran_28_C"/>
    <property type="match status" value="1"/>
</dbReference>
<dbReference type="Pfam" id="PF03033">
    <property type="entry name" value="Glyco_transf_28"/>
    <property type="match status" value="1"/>
</dbReference>
<dbReference type="SUPFAM" id="SSF53756">
    <property type="entry name" value="UDP-Glycosyltransferase/glycogen phosphorylase"/>
    <property type="match status" value="1"/>
</dbReference>